<dbReference type="EMBL" id="CP000319">
    <property type="protein sequence ID" value="ABE62368.1"/>
    <property type="molecule type" value="Genomic_DNA"/>
</dbReference>
<dbReference type="RefSeq" id="WP_011510055.1">
    <property type="nucleotide sequence ID" value="NC_007964.1"/>
</dbReference>
<dbReference type="SMR" id="Q1QN29"/>
<dbReference type="STRING" id="323097.Nham_1546"/>
<dbReference type="KEGG" id="nha:Nham_1546"/>
<dbReference type="eggNOG" id="COG0088">
    <property type="taxonomic scope" value="Bacteria"/>
</dbReference>
<dbReference type="HOGENOM" id="CLU_041575_5_1_5"/>
<dbReference type="OrthoDB" id="9803201at2"/>
<dbReference type="Proteomes" id="UP000001953">
    <property type="component" value="Chromosome"/>
</dbReference>
<dbReference type="GO" id="GO:1990904">
    <property type="term" value="C:ribonucleoprotein complex"/>
    <property type="evidence" value="ECO:0007669"/>
    <property type="project" value="UniProtKB-KW"/>
</dbReference>
<dbReference type="GO" id="GO:0005840">
    <property type="term" value="C:ribosome"/>
    <property type="evidence" value="ECO:0007669"/>
    <property type="project" value="UniProtKB-KW"/>
</dbReference>
<dbReference type="GO" id="GO:0019843">
    <property type="term" value="F:rRNA binding"/>
    <property type="evidence" value="ECO:0007669"/>
    <property type="project" value="UniProtKB-UniRule"/>
</dbReference>
<dbReference type="GO" id="GO:0003735">
    <property type="term" value="F:structural constituent of ribosome"/>
    <property type="evidence" value="ECO:0007669"/>
    <property type="project" value="InterPro"/>
</dbReference>
<dbReference type="GO" id="GO:0006412">
    <property type="term" value="P:translation"/>
    <property type="evidence" value="ECO:0007669"/>
    <property type="project" value="UniProtKB-UniRule"/>
</dbReference>
<dbReference type="Gene3D" id="3.40.1370.10">
    <property type="match status" value="1"/>
</dbReference>
<dbReference type="HAMAP" id="MF_01328_B">
    <property type="entry name" value="Ribosomal_uL4_B"/>
    <property type="match status" value="1"/>
</dbReference>
<dbReference type="InterPro" id="IPR002136">
    <property type="entry name" value="Ribosomal_uL4"/>
</dbReference>
<dbReference type="InterPro" id="IPR013005">
    <property type="entry name" value="Ribosomal_uL4-like"/>
</dbReference>
<dbReference type="InterPro" id="IPR023574">
    <property type="entry name" value="Ribosomal_uL4_dom_sf"/>
</dbReference>
<dbReference type="NCBIfam" id="TIGR03953">
    <property type="entry name" value="rplD_bact"/>
    <property type="match status" value="1"/>
</dbReference>
<dbReference type="PANTHER" id="PTHR10746">
    <property type="entry name" value="50S RIBOSOMAL PROTEIN L4"/>
    <property type="match status" value="1"/>
</dbReference>
<dbReference type="PANTHER" id="PTHR10746:SF6">
    <property type="entry name" value="LARGE RIBOSOMAL SUBUNIT PROTEIN UL4M"/>
    <property type="match status" value="1"/>
</dbReference>
<dbReference type="Pfam" id="PF00573">
    <property type="entry name" value="Ribosomal_L4"/>
    <property type="match status" value="1"/>
</dbReference>
<dbReference type="SUPFAM" id="SSF52166">
    <property type="entry name" value="Ribosomal protein L4"/>
    <property type="match status" value="1"/>
</dbReference>
<reference key="1">
    <citation type="submission" date="2006-03" db="EMBL/GenBank/DDBJ databases">
        <title>Complete sequence of chromosome of Nitrobacter hamburgensis X14.</title>
        <authorList>
            <consortium name="US DOE Joint Genome Institute"/>
            <person name="Copeland A."/>
            <person name="Lucas S."/>
            <person name="Lapidus A."/>
            <person name="Barry K."/>
            <person name="Detter J.C."/>
            <person name="Glavina del Rio T."/>
            <person name="Hammon N."/>
            <person name="Israni S."/>
            <person name="Dalin E."/>
            <person name="Tice H."/>
            <person name="Pitluck S."/>
            <person name="Chain P."/>
            <person name="Malfatti S."/>
            <person name="Shin M."/>
            <person name="Vergez L."/>
            <person name="Schmutz J."/>
            <person name="Larimer F."/>
            <person name="Land M."/>
            <person name="Hauser L."/>
            <person name="Kyrpides N."/>
            <person name="Ivanova N."/>
            <person name="Ward B."/>
            <person name="Arp D."/>
            <person name="Klotz M."/>
            <person name="Stein L."/>
            <person name="O'Mullan G."/>
            <person name="Starkenburg S."/>
            <person name="Sayavedra L."/>
            <person name="Poret-Peterson A.T."/>
            <person name="Gentry M.E."/>
            <person name="Bruce D."/>
            <person name="Richardson P."/>
        </authorList>
    </citation>
    <scope>NUCLEOTIDE SEQUENCE [LARGE SCALE GENOMIC DNA]</scope>
    <source>
        <strain>DSM 10229 / NCIMB 13809 / X14</strain>
    </source>
</reference>
<keyword id="KW-1185">Reference proteome</keyword>
<keyword id="KW-0687">Ribonucleoprotein</keyword>
<keyword id="KW-0689">Ribosomal protein</keyword>
<keyword id="KW-0694">RNA-binding</keyword>
<keyword id="KW-0699">rRNA-binding</keyword>
<sequence>MELNVTTLEGNAAGSVQLSDGIFGLEPRKDLIQRCVNWQLAKRQAGTHKTKGRAEIWRTGKKMFKQKGTGNARHGSARVPQFRGGGRAFGPVVRSHAHDLPKKVRALALRHALSAKAKDGGLIVIDSAELNEAKTKALVGHFSGLGLTNALIVDGAAVHAGFATAARNIPNIDVLPIQGINVYDILRRRKLVLTKAAVDALEARFK</sequence>
<comment type="function">
    <text evidence="1">One of the primary rRNA binding proteins, this protein initially binds near the 5'-end of the 23S rRNA. It is important during the early stages of 50S assembly. It makes multiple contacts with different domains of the 23S rRNA in the assembled 50S subunit and ribosome.</text>
</comment>
<comment type="function">
    <text evidence="1">Forms part of the polypeptide exit tunnel.</text>
</comment>
<comment type="subunit">
    <text evidence="1">Part of the 50S ribosomal subunit.</text>
</comment>
<comment type="similarity">
    <text evidence="1">Belongs to the universal ribosomal protein uL4 family.</text>
</comment>
<accession>Q1QN29</accession>
<name>RL4_NITHX</name>
<proteinExistence type="inferred from homology"/>
<feature type="chain" id="PRO_1000052453" description="Large ribosomal subunit protein uL4">
    <location>
        <begin position="1"/>
        <end position="206"/>
    </location>
</feature>
<organism>
    <name type="scientific">Nitrobacter hamburgensis (strain DSM 10229 / NCIMB 13809 / X14)</name>
    <dbReference type="NCBI Taxonomy" id="323097"/>
    <lineage>
        <taxon>Bacteria</taxon>
        <taxon>Pseudomonadati</taxon>
        <taxon>Pseudomonadota</taxon>
        <taxon>Alphaproteobacteria</taxon>
        <taxon>Hyphomicrobiales</taxon>
        <taxon>Nitrobacteraceae</taxon>
        <taxon>Nitrobacter</taxon>
    </lineage>
</organism>
<evidence type="ECO:0000255" key="1">
    <source>
        <dbReference type="HAMAP-Rule" id="MF_01328"/>
    </source>
</evidence>
<evidence type="ECO:0000305" key="2"/>
<gene>
    <name evidence="1" type="primary">rplD</name>
    <name type="ordered locus">Nham_1546</name>
</gene>
<protein>
    <recommendedName>
        <fullName evidence="1">Large ribosomal subunit protein uL4</fullName>
    </recommendedName>
    <alternativeName>
        <fullName evidence="2">50S ribosomal protein L4</fullName>
    </alternativeName>
</protein>